<protein>
    <recommendedName>
        <fullName evidence="1">Large ribosomal subunit protein bL27</fullName>
    </recommendedName>
    <alternativeName>
        <fullName evidence="3">50S ribosomal protein L27</fullName>
    </alternativeName>
</protein>
<proteinExistence type="inferred from homology"/>
<gene>
    <name evidence="1" type="primary">rpmA</name>
    <name type="ordered locus">M446_4211</name>
</gene>
<keyword id="KW-0687">Ribonucleoprotein</keyword>
<keyword id="KW-0689">Ribosomal protein</keyword>
<accession>B0UMS2</accession>
<organism>
    <name type="scientific">Methylobacterium sp. (strain 4-46)</name>
    <dbReference type="NCBI Taxonomy" id="426117"/>
    <lineage>
        <taxon>Bacteria</taxon>
        <taxon>Pseudomonadati</taxon>
        <taxon>Pseudomonadota</taxon>
        <taxon>Alphaproteobacteria</taxon>
        <taxon>Hyphomicrobiales</taxon>
        <taxon>Methylobacteriaceae</taxon>
        <taxon>Methylobacterium</taxon>
    </lineage>
</organism>
<evidence type="ECO:0000255" key="1">
    <source>
        <dbReference type="HAMAP-Rule" id="MF_00539"/>
    </source>
</evidence>
<evidence type="ECO:0000256" key="2">
    <source>
        <dbReference type="SAM" id="MobiDB-lite"/>
    </source>
</evidence>
<evidence type="ECO:0000305" key="3"/>
<sequence length="93" mass="9995">MAHKKAGGSSRNGRDSEGRRLGVKKFGNEAVIAGNIIVRQRGTRWHPGTNVGIGRDHTLFALTDGRVQFATKQGRAYVTVVPAQDAPAREAAE</sequence>
<comment type="similarity">
    <text evidence="1">Belongs to the bacterial ribosomal protein bL27 family.</text>
</comment>
<name>RL27_METS4</name>
<dbReference type="EMBL" id="CP000943">
    <property type="protein sequence ID" value="ACA18560.1"/>
    <property type="molecule type" value="Genomic_DNA"/>
</dbReference>
<dbReference type="RefSeq" id="WP_012333951.1">
    <property type="nucleotide sequence ID" value="NC_010511.1"/>
</dbReference>
<dbReference type="SMR" id="B0UMS2"/>
<dbReference type="STRING" id="426117.M446_4211"/>
<dbReference type="KEGG" id="met:M446_4211"/>
<dbReference type="eggNOG" id="COG0211">
    <property type="taxonomic scope" value="Bacteria"/>
</dbReference>
<dbReference type="HOGENOM" id="CLU_095424_4_1_5"/>
<dbReference type="GO" id="GO:0022625">
    <property type="term" value="C:cytosolic large ribosomal subunit"/>
    <property type="evidence" value="ECO:0007669"/>
    <property type="project" value="TreeGrafter"/>
</dbReference>
<dbReference type="GO" id="GO:0003735">
    <property type="term" value="F:structural constituent of ribosome"/>
    <property type="evidence" value="ECO:0007669"/>
    <property type="project" value="InterPro"/>
</dbReference>
<dbReference type="GO" id="GO:0006412">
    <property type="term" value="P:translation"/>
    <property type="evidence" value="ECO:0007669"/>
    <property type="project" value="UniProtKB-UniRule"/>
</dbReference>
<dbReference type="FunFam" id="2.40.50.100:FF:000020">
    <property type="entry name" value="50S ribosomal protein L27"/>
    <property type="match status" value="1"/>
</dbReference>
<dbReference type="Gene3D" id="2.40.50.100">
    <property type="match status" value="1"/>
</dbReference>
<dbReference type="HAMAP" id="MF_00539">
    <property type="entry name" value="Ribosomal_bL27"/>
    <property type="match status" value="1"/>
</dbReference>
<dbReference type="InterPro" id="IPR001684">
    <property type="entry name" value="Ribosomal_bL27"/>
</dbReference>
<dbReference type="InterPro" id="IPR018261">
    <property type="entry name" value="Ribosomal_bL27_CS"/>
</dbReference>
<dbReference type="NCBIfam" id="TIGR00062">
    <property type="entry name" value="L27"/>
    <property type="match status" value="1"/>
</dbReference>
<dbReference type="PANTHER" id="PTHR15893:SF0">
    <property type="entry name" value="LARGE RIBOSOMAL SUBUNIT PROTEIN BL27M"/>
    <property type="match status" value="1"/>
</dbReference>
<dbReference type="PANTHER" id="PTHR15893">
    <property type="entry name" value="RIBOSOMAL PROTEIN L27"/>
    <property type="match status" value="1"/>
</dbReference>
<dbReference type="Pfam" id="PF01016">
    <property type="entry name" value="Ribosomal_L27"/>
    <property type="match status" value="1"/>
</dbReference>
<dbReference type="PRINTS" id="PR00063">
    <property type="entry name" value="RIBOSOMALL27"/>
</dbReference>
<dbReference type="SUPFAM" id="SSF110324">
    <property type="entry name" value="Ribosomal L27 protein-like"/>
    <property type="match status" value="1"/>
</dbReference>
<dbReference type="PROSITE" id="PS00831">
    <property type="entry name" value="RIBOSOMAL_L27"/>
    <property type="match status" value="1"/>
</dbReference>
<feature type="chain" id="PRO_1000128773" description="Large ribosomal subunit protein bL27">
    <location>
        <begin position="1"/>
        <end position="93"/>
    </location>
</feature>
<feature type="region of interest" description="Disordered" evidence="2">
    <location>
        <begin position="1"/>
        <end position="22"/>
    </location>
</feature>
<reference key="1">
    <citation type="submission" date="2008-02" db="EMBL/GenBank/DDBJ databases">
        <title>Complete sequence of chromosome of Methylobacterium sp. 4-46.</title>
        <authorList>
            <consortium name="US DOE Joint Genome Institute"/>
            <person name="Copeland A."/>
            <person name="Lucas S."/>
            <person name="Lapidus A."/>
            <person name="Glavina del Rio T."/>
            <person name="Dalin E."/>
            <person name="Tice H."/>
            <person name="Bruce D."/>
            <person name="Goodwin L."/>
            <person name="Pitluck S."/>
            <person name="Chertkov O."/>
            <person name="Brettin T."/>
            <person name="Detter J.C."/>
            <person name="Han C."/>
            <person name="Kuske C.R."/>
            <person name="Schmutz J."/>
            <person name="Larimer F."/>
            <person name="Land M."/>
            <person name="Hauser L."/>
            <person name="Kyrpides N."/>
            <person name="Ivanova N."/>
            <person name="Marx C.J."/>
            <person name="Richardson P."/>
        </authorList>
    </citation>
    <scope>NUCLEOTIDE SEQUENCE [LARGE SCALE GENOMIC DNA]</scope>
    <source>
        <strain>4-46</strain>
    </source>
</reference>